<accession>B2A3J2</accession>
<reference key="1">
    <citation type="submission" date="2008-04" db="EMBL/GenBank/DDBJ databases">
        <title>Complete sequence of chromosome of Natranaerobius thermophilus JW/NM-WN-LF.</title>
        <authorList>
            <consortium name="US DOE Joint Genome Institute"/>
            <person name="Copeland A."/>
            <person name="Lucas S."/>
            <person name="Lapidus A."/>
            <person name="Glavina del Rio T."/>
            <person name="Dalin E."/>
            <person name="Tice H."/>
            <person name="Bruce D."/>
            <person name="Goodwin L."/>
            <person name="Pitluck S."/>
            <person name="Chertkov O."/>
            <person name="Brettin T."/>
            <person name="Detter J.C."/>
            <person name="Han C."/>
            <person name="Kuske C.R."/>
            <person name="Schmutz J."/>
            <person name="Larimer F."/>
            <person name="Land M."/>
            <person name="Hauser L."/>
            <person name="Kyrpides N."/>
            <person name="Lykidis A."/>
            <person name="Mesbah N.M."/>
            <person name="Wiegel J."/>
        </authorList>
    </citation>
    <scope>NUCLEOTIDE SEQUENCE [LARGE SCALE GENOMIC DNA]</scope>
    <source>
        <strain>ATCC BAA-1301 / DSM 18059 / JW/NM-WN-LF</strain>
    </source>
</reference>
<dbReference type="EMBL" id="CP001034">
    <property type="protein sequence ID" value="ACB86421.1"/>
    <property type="molecule type" value="Genomic_DNA"/>
</dbReference>
<dbReference type="RefSeq" id="WP_012449253.1">
    <property type="nucleotide sequence ID" value="NC_010718.1"/>
</dbReference>
<dbReference type="SMR" id="B2A3J2"/>
<dbReference type="FunCoup" id="B2A3J2">
    <property type="interactions" value="291"/>
</dbReference>
<dbReference type="STRING" id="457570.Nther_2874"/>
<dbReference type="KEGG" id="nth:Nther_2874"/>
<dbReference type="eggNOG" id="COG0254">
    <property type="taxonomic scope" value="Bacteria"/>
</dbReference>
<dbReference type="HOGENOM" id="CLU_114306_4_3_9"/>
<dbReference type="InParanoid" id="B2A3J2"/>
<dbReference type="OrthoDB" id="9803251at2"/>
<dbReference type="Proteomes" id="UP000001683">
    <property type="component" value="Chromosome"/>
</dbReference>
<dbReference type="GO" id="GO:1990904">
    <property type="term" value="C:ribonucleoprotein complex"/>
    <property type="evidence" value="ECO:0007669"/>
    <property type="project" value="UniProtKB-KW"/>
</dbReference>
<dbReference type="GO" id="GO:0005840">
    <property type="term" value="C:ribosome"/>
    <property type="evidence" value="ECO:0007669"/>
    <property type="project" value="UniProtKB-KW"/>
</dbReference>
<dbReference type="GO" id="GO:0046872">
    <property type="term" value="F:metal ion binding"/>
    <property type="evidence" value="ECO:0007669"/>
    <property type="project" value="UniProtKB-KW"/>
</dbReference>
<dbReference type="GO" id="GO:0019843">
    <property type="term" value="F:rRNA binding"/>
    <property type="evidence" value="ECO:0007669"/>
    <property type="project" value="UniProtKB-KW"/>
</dbReference>
<dbReference type="GO" id="GO:0003735">
    <property type="term" value="F:structural constituent of ribosome"/>
    <property type="evidence" value="ECO:0007669"/>
    <property type="project" value="InterPro"/>
</dbReference>
<dbReference type="GO" id="GO:0006412">
    <property type="term" value="P:translation"/>
    <property type="evidence" value="ECO:0007669"/>
    <property type="project" value="UniProtKB-UniRule"/>
</dbReference>
<dbReference type="Gene3D" id="4.10.830.30">
    <property type="entry name" value="Ribosomal protein L31"/>
    <property type="match status" value="1"/>
</dbReference>
<dbReference type="HAMAP" id="MF_00501">
    <property type="entry name" value="Ribosomal_bL31_1"/>
    <property type="match status" value="1"/>
</dbReference>
<dbReference type="InterPro" id="IPR034704">
    <property type="entry name" value="Ribosomal_bL28/bL31-like_sf"/>
</dbReference>
<dbReference type="InterPro" id="IPR002150">
    <property type="entry name" value="Ribosomal_bL31"/>
</dbReference>
<dbReference type="InterPro" id="IPR027491">
    <property type="entry name" value="Ribosomal_bL31_A"/>
</dbReference>
<dbReference type="InterPro" id="IPR042105">
    <property type="entry name" value="Ribosomal_bL31_sf"/>
</dbReference>
<dbReference type="NCBIfam" id="TIGR00105">
    <property type="entry name" value="L31"/>
    <property type="match status" value="1"/>
</dbReference>
<dbReference type="NCBIfam" id="NF000612">
    <property type="entry name" value="PRK00019.1"/>
    <property type="match status" value="1"/>
</dbReference>
<dbReference type="NCBIfam" id="NF001809">
    <property type="entry name" value="PRK00528.1"/>
    <property type="match status" value="1"/>
</dbReference>
<dbReference type="PANTHER" id="PTHR33280">
    <property type="entry name" value="50S RIBOSOMAL PROTEIN L31, CHLOROPLASTIC"/>
    <property type="match status" value="1"/>
</dbReference>
<dbReference type="PANTHER" id="PTHR33280:SF1">
    <property type="entry name" value="LARGE RIBOSOMAL SUBUNIT PROTEIN BL31C"/>
    <property type="match status" value="1"/>
</dbReference>
<dbReference type="Pfam" id="PF01197">
    <property type="entry name" value="Ribosomal_L31"/>
    <property type="match status" value="1"/>
</dbReference>
<dbReference type="PRINTS" id="PR01249">
    <property type="entry name" value="RIBOSOMALL31"/>
</dbReference>
<dbReference type="SUPFAM" id="SSF143800">
    <property type="entry name" value="L28p-like"/>
    <property type="match status" value="1"/>
</dbReference>
<dbReference type="PROSITE" id="PS01143">
    <property type="entry name" value="RIBOSOMAL_L31"/>
    <property type="match status" value="1"/>
</dbReference>
<proteinExistence type="inferred from homology"/>
<organism>
    <name type="scientific">Natranaerobius thermophilus (strain ATCC BAA-1301 / DSM 18059 / JW/NM-WN-LF)</name>
    <dbReference type="NCBI Taxonomy" id="457570"/>
    <lineage>
        <taxon>Bacteria</taxon>
        <taxon>Bacillati</taxon>
        <taxon>Bacillota</taxon>
        <taxon>Clostridia</taxon>
        <taxon>Natranaerobiales</taxon>
        <taxon>Natranaerobiaceae</taxon>
        <taxon>Natranaerobius</taxon>
    </lineage>
</organism>
<feature type="chain" id="PRO_1000126673" description="Large ribosomal subunit protein bL31">
    <location>
        <begin position="1"/>
        <end position="66"/>
    </location>
</feature>
<feature type="binding site" evidence="1">
    <location>
        <position position="16"/>
    </location>
    <ligand>
        <name>Zn(2+)</name>
        <dbReference type="ChEBI" id="CHEBI:29105"/>
    </ligand>
</feature>
<feature type="binding site" evidence="1">
    <location>
        <position position="18"/>
    </location>
    <ligand>
        <name>Zn(2+)</name>
        <dbReference type="ChEBI" id="CHEBI:29105"/>
    </ligand>
</feature>
<feature type="binding site" evidence="1">
    <location>
        <position position="36"/>
    </location>
    <ligand>
        <name>Zn(2+)</name>
        <dbReference type="ChEBI" id="CHEBI:29105"/>
    </ligand>
</feature>
<feature type="binding site" evidence="1">
    <location>
        <position position="39"/>
    </location>
    <ligand>
        <name>Zn(2+)</name>
        <dbReference type="ChEBI" id="CHEBI:29105"/>
    </ligand>
</feature>
<protein>
    <recommendedName>
        <fullName evidence="1">Large ribosomal subunit protein bL31</fullName>
    </recommendedName>
    <alternativeName>
        <fullName evidence="2">50S ribosomal protein L31</fullName>
    </alternativeName>
</protein>
<comment type="function">
    <text evidence="1">Binds the 23S rRNA.</text>
</comment>
<comment type="cofactor">
    <cofactor evidence="1">
        <name>Zn(2+)</name>
        <dbReference type="ChEBI" id="CHEBI:29105"/>
    </cofactor>
    <text evidence="1">Binds 1 zinc ion per subunit.</text>
</comment>
<comment type="subunit">
    <text evidence="1">Part of the 50S ribosomal subunit.</text>
</comment>
<comment type="similarity">
    <text evidence="1">Belongs to the bacterial ribosomal protein bL31 family. Type A subfamily.</text>
</comment>
<sequence>MKREIHPEYKKAKVVCACGNSFETGSTKEELKVEICSSCHPFFTGKQKLVDSGGRVEKFKRKYGLE</sequence>
<evidence type="ECO:0000255" key="1">
    <source>
        <dbReference type="HAMAP-Rule" id="MF_00501"/>
    </source>
</evidence>
<evidence type="ECO:0000305" key="2"/>
<keyword id="KW-0479">Metal-binding</keyword>
<keyword id="KW-1185">Reference proteome</keyword>
<keyword id="KW-0687">Ribonucleoprotein</keyword>
<keyword id="KW-0689">Ribosomal protein</keyword>
<keyword id="KW-0694">RNA-binding</keyword>
<keyword id="KW-0699">rRNA-binding</keyword>
<keyword id="KW-0862">Zinc</keyword>
<name>RL31_NATTJ</name>
<gene>
    <name evidence="1" type="primary">rpmE</name>
    <name type="ordered locus">Nther_2874</name>
</gene>